<reference key="1">
    <citation type="journal article" date="1995" name="J. Biol. Chem.">
        <title>Molecular cloning, expression, and partial characterization of two novel members of the ovalbumin family of serine proteinase inhibitors.</title>
        <authorList>
            <person name="Sprecher C.A."/>
            <person name="Morgenstern K.A."/>
            <person name="Mathewes S."/>
            <person name="Dahlen J.R."/>
            <person name="Schrader S.K."/>
            <person name="Foster D.C."/>
            <person name="Kisiel W."/>
        </authorList>
    </citation>
    <scope>NUCLEOTIDE SEQUENCE [MRNA]</scope>
    <source>
        <tissue>Placenta</tissue>
    </source>
</reference>
<reference key="2">
    <citation type="journal article" date="1996" name="J. Biol. Chem.">
        <title>A cytosolic granzyme B inhibitor related to the viral apoptotic regulator cytokine response modifier A is present in cytotoxic lymphocytes.</title>
        <authorList>
            <person name="Sun J."/>
            <person name="Bird C.H."/>
            <person name="Sutton V."/>
            <person name="McDonald L."/>
            <person name="Coughlin P.B."/>
            <person name="Jong T.A."/>
            <person name="Trapani J.A."/>
            <person name="Bird P.I."/>
        </authorList>
    </citation>
    <scope>NUCLEOTIDE SEQUENCE [MRNA]</scope>
    <source>
        <tissue>Bone marrow</tissue>
        <tissue>Placenta</tissue>
    </source>
</reference>
<reference key="3">
    <citation type="submission" date="2001-04" db="EMBL/GenBank/DDBJ databases">
        <title>Serine proteinase inhibitor 9 as a tumor antigen recognized by cytotoxic T lymphocytes of epithelial cancer patients.</title>
        <authorList>
            <person name="Tanaka K."/>
            <person name="Harashima N."/>
            <person name="Shichijo S."/>
            <person name="Harada M."/>
            <person name="Itoh K."/>
        </authorList>
    </citation>
    <scope>NUCLEOTIDE SEQUENCE [MRNA]</scope>
</reference>
<reference key="4">
    <citation type="journal article" date="2004" name="Nat. Genet.">
        <title>Complete sequencing and characterization of 21,243 full-length human cDNAs.</title>
        <authorList>
            <person name="Ota T."/>
            <person name="Suzuki Y."/>
            <person name="Nishikawa T."/>
            <person name="Otsuki T."/>
            <person name="Sugiyama T."/>
            <person name="Irie R."/>
            <person name="Wakamatsu A."/>
            <person name="Hayashi K."/>
            <person name="Sato H."/>
            <person name="Nagai K."/>
            <person name="Kimura K."/>
            <person name="Makita H."/>
            <person name="Sekine M."/>
            <person name="Obayashi M."/>
            <person name="Nishi T."/>
            <person name="Shibahara T."/>
            <person name="Tanaka T."/>
            <person name="Ishii S."/>
            <person name="Yamamoto J."/>
            <person name="Saito K."/>
            <person name="Kawai Y."/>
            <person name="Isono Y."/>
            <person name="Nakamura Y."/>
            <person name="Nagahari K."/>
            <person name="Murakami K."/>
            <person name="Yasuda T."/>
            <person name="Iwayanagi T."/>
            <person name="Wagatsuma M."/>
            <person name="Shiratori A."/>
            <person name="Sudo H."/>
            <person name="Hosoiri T."/>
            <person name="Kaku Y."/>
            <person name="Kodaira H."/>
            <person name="Kondo H."/>
            <person name="Sugawara M."/>
            <person name="Takahashi M."/>
            <person name="Kanda K."/>
            <person name="Yokoi T."/>
            <person name="Furuya T."/>
            <person name="Kikkawa E."/>
            <person name="Omura Y."/>
            <person name="Abe K."/>
            <person name="Kamihara K."/>
            <person name="Katsuta N."/>
            <person name="Sato K."/>
            <person name="Tanikawa M."/>
            <person name="Yamazaki M."/>
            <person name="Ninomiya K."/>
            <person name="Ishibashi T."/>
            <person name="Yamashita H."/>
            <person name="Murakawa K."/>
            <person name="Fujimori K."/>
            <person name="Tanai H."/>
            <person name="Kimata M."/>
            <person name="Watanabe M."/>
            <person name="Hiraoka S."/>
            <person name="Chiba Y."/>
            <person name="Ishida S."/>
            <person name="Ono Y."/>
            <person name="Takiguchi S."/>
            <person name="Watanabe S."/>
            <person name="Yosida M."/>
            <person name="Hotuta T."/>
            <person name="Kusano J."/>
            <person name="Kanehori K."/>
            <person name="Takahashi-Fujii A."/>
            <person name="Hara H."/>
            <person name="Tanase T.-O."/>
            <person name="Nomura Y."/>
            <person name="Togiya S."/>
            <person name="Komai F."/>
            <person name="Hara R."/>
            <person name="Takeuchi K."/>
            <person name="Arita M."/>
            <person name="Imose N."/>
            <person name="Musashino K."/>
            <person name="Yuuki H."/>
            <person name="Oshima A."/>
            <person name="Sasaki N."/>
            <person name="Aotsuka S."/>
            <person name="Yoshikawa Y."/>
            <person name="Matsunawa H."/>
            <person name="Ichihara T."/>
            <person name="Shiohata N."/>
            <person name="Sano S."/>
            <person name="Moriya S."/>
            <person name="Momiyama H."/>
            <person name="Satoh N."/>
            <person name="Takami S."/>
            <person name="Terashima Y."/>
            <person name="Suzuki O."/>
            <person name="Nakagawa S."/>
            <person name="Senoh A."/>
            <person name="Mizoguchi H."/>
            <person name="Goto Y."/>
            <person name="Shimizu F."/>
            <person name="Wakebe H."/>
            <person name="Hishigaki H."/>
            <person name="Watanabe T."/>
            <person name="Sugiyama A."/>
            <person name="Takemoto M."/>
            <person name="Kawakami B."/>
            <person name="Yamazaki M."/>
            <person name="Watanabe K."/>
            <person name="Kumagai A."/>
            <person name="Itakura S."/>
            <person name="Fukuzumi Y."/>
            <person name="Fujimori Y."/>
            <person name="Komiyama M."/>
            <person name="Tashiro H."/>
            <person name="Tanigami A."/>
            <person name="Fujiwara T."/>
            <person name="Ono T."/>
            <person name="Yamada K."/>
            <person name="Fujii Y."/>
            <person name="Ozaki K."/>
            <person name="Hirao M."/>
            <person name="Ohmori Y."/>
            <person name="Kawabata A."/>
            <person name="Hikiji T."/>
            <person name="Kobatake N."/>
            <person name="Inagaki H."/>
            <person name="Ikema Y."/>
            <person name="Okamoto S."/>
            <person name="Okitani R."/>
            <person name="Kawakami T."/>
            <person name="Noguchi S."/>
            <person name="Itoh T."/>
            <person name="Shigeta K."/>
            <person name="Senba T."/>
            <person name="Matsumura K."/>
            <person name="Nakajima Y."/>
            <person name="Mizuno T."/>
            <person name="Morinaga M."/>
            <person name="Sasaki M."/>
            <person name="Togashi T."/>
            <person name="Oyama M."/>
            <person name="Hata H."/>
            <person name="Watanabe M."/>
            <person name="Komatsu T."/>
            <person name="Mizushima-Sugano J."/>
            <person name="Satoh T."/>
            <person name="Shirai Y."/>
            <person name="Takahashi Y."/>
            <person name="Nakagawa K."/>
            <person name="Okumura K."/>
            <person name="Nagase T."/>
            <person name="Nomura N."/>
            <person name="Kikuchi H."/>
            <person name="Masuho Y."/>
            <person name="Yamashita R."/>
            <person name="Nakai K."/>
            <person name="Yada T."/>
            <person name="Nakamura Y."/>
            <person name="Ohara O."/>
            <person name="Isogai T."/>
            <person name="Sugano S."/>
        </authorList>
    </citation>
    <scope>NUCLEOTIDE SEQUENCE [LARGE SCALE MRNA]</scope>
    <source>
        <tissue>Testis</tissue>
    </source>
</reference>
<reference key="5">
    <citation type="submission" date="2003-05" db="EMBL/GenBank/DDBJ databases">
        <title>Cloning of human full-length CDSs in BD Creator(TM) system donor vector.</title>
        <authorList>
            <person name="Kalnine N."/>
            <person name="Chen X."/>
            <person name="Rolfs A."/>
            <person name="Halleck A."/>
            <person name="Hines L."/>
            <person name="Eisenstein S."/>
            <person name="Koundinya M."/>
            <person name="Raphael J."/>
            <person name="Moreira D."/>
            <person name="Kelley T."/>
            <person name="LaBaer J."/>
            <person name="Lin Y."/>
            <person name="Phelan M."/>
            <person name="Farmer A."/>
        </authorList>
    </citation>
    <scope>NUCLEOTIDE SEQUENCE [LARGE SCALE MRNA]</scope>
</reference>
<reference key="6">
    <citation type="submission" date="2004-05" db="EMBL/GenBank/DDBJ databases">
        <title>Cloning of human full open reading frames in Gateway(TM) system entry vector (pDONR201).</title>
        <authorList>
            <person name="Ebert L."/>
            <person name="Schick M."/>
            <person name="Neubert P."/>
            <person name="Schatten R."/>
            <person name="Henze S."/>
            <person name="Korn B."/>
        </authorList>
    </citation>
    <scope>NUCLEOTIDE SEQUENCE [LARGE SCALE MRNA]</scope>
</reference>
<reference key="7">
    <citation type="journal article" date="2003" name="Nature">
        <title>The DNA sequence and analysis of human chromosome 6.</title>
        <authorList>
            <person name="Mungall A.J."/>
            <person name="Palmer S.A."/>
            <person name="Sims S.K."/>
            <person name="Edwards C.A."/>
            <person name="Ashurst J.L."/>
            <person name="Wilming L."/>
            <person name="Jones M.C."/>
            <person name="Horton R."/>
            <person name="Hunt S.E."/>
            <person name="Scott C.E."/>
            <person name="Gilbert J.G.R."/>
            <person name="Clamp M.E."/>
            <person name="Bethel G."/>
            <person name="Milne S."/>
            <person name="Ainscough R."/>
            <person name="Almeida J.P."/>
            <person name="Ambrose K.D."/>
            <person name="Andrews T.D."/>
            <person name="Ashwell R.I.S."/>
            <person name="Babbage A.K."/>
            <person name="Bagguley C.L."/>
            <person name="Bailey J."/>
            <person name="Banerjee R."/>
            <person name="Barker D.J."/>
            <person name="Barlow K.F."/>
            <person name="Bates K."/>
            <person name="Beare D.M."/>
            <person name="Beasley H."/>
            <person name="Beasley O."/>
            <person name="Bird C.P."/>
            <person name="Blakey S.E."/>
            <person name="Bray-Allen S."/>
            <person name="Brook J."/>
            <person name="Brown A.J."/>
            <person name="Brown J.Y."/>
            <person name="Burford D.C."/>
            <person name="Burrill W."/>
            <person name="Burton J."/>
            <person name="Carder C."/>
            <person name="Carter N.P."/>
            <person name="Chapman J.C."/>
            <person name="Clark S.Y."/>
            <person name="Clark G."/>
            <person name="Clee C.M."/>
            <person name="Clegg S."/>
            <person name="Cobley V."/>
            <person name="Collier R.E."/>
            <person name="Collins J.E."/>
            <person name="Colman L.K."/>
            <person name="Corby N.R."/>
            <person name="Coville G.J."/>
            <person name="Culley K.M."/>
            <person name="Dhami P."/>
            <person name="Davies J."/>
            <person name="Dunn M."/>
            <person name="Earthrowl M.E."/>
            <person name="Ellington A.E."/>
            <person name="Evans K.A."/>
            <person name="Faulkner L."/>
            <person name="Francis M.D."/>
            <person name="Frankish A."/>
            <person name="Frankland J."/>
            <person name="French L."/>
            <person name="Garner P."/>
            <person name="Garnett J."/>
            <person name="Ghori M.J."/>
            <person name="Gilby L.M."/>
            <person name="Gillson C.J."/>
            <person name="Glithero R.J."/>
            <person name="Grafham D.V."/>
            <person name="Grant M."/>
            <person name="Gribble S."/>
            <person name="Griffiths C."/>
            <person name="Griffiths M.N.D."/>
            <person name="Hall R."/>
            <person name="Halls K.S."/>
            <person name="Hammond S."/>
            <person name="Harley J.L."/>
            <person name="Hart E.A."/>
            <person name="Heath P.D."/>
            <person name="Heathcott R."/>
            <person name="Holmes S.J."/>
            <person name="Howden P.J."/>
            <person name="Howe K.L."/>
            <person name="Howell G.R."/>
            <person name="Huckle E."/>
            <person name="Humphray S.J."/>
            <person name="Humphries M.D."/>
            <person name="Hunt A.R."/>
            <person name="Johnson C.M."/>
            <person name="Joy A.A."/>
            <person name="Kay M."/>
            <person name="Keenan S.J."/>
            <person name="Kimberley A.M."/>
            <person name="King A."/>
            <person name="Laird G.K."/>
            <person name="Langford C."/>
            <person name="Lawlor S."/>
            <person name="Leongamornlert D.A."/>
            <person name="Leversha M."/>
            <person name="Lloyd C.R."/>
            <person name="Lloyd D.M."/>
            <person name="Loveland J.E."/>
            <person name="Lovell J."/>
            <person name="Martin S."/>
            <person name="Mashreghi-Mohammadi M."/>
            <person name="Maslen G.L."/>
            <person name="Matthews L."/>
            <person name="McCann O.T."/>
            <person name="McLaren S.J."/>
            <person name="McLay K."/>
            <person name="McMurray A."/>
            <person name="Moore M.J.F."/>
            <person name="Mullikin J.C."/>
            <person name="Niblett D."/>
            <person name="Nickerson T."/>
            <person name="Novik K.L."/>
            <person name="Oliver K."/>
            <person name="Overton-Larty E.K."/>
            <person name="Parker A."/>
            <person name="Patel R."/>
            <person name="Pearce A.V."/>
            <person name="Peck A.I."/>
            <person name="Phillimore B.J.C.T."/>
            <person name="Phillips S."/>
            <person name="Plumb R.W."/>
            <person name="Porter K.M."/>
            <person name="Ramsey Y."/>
            <person name="Ranby S.A."/>
            <person name="Rice C.M."/>
            <person name="Ross M.T."/>
            <person name="Searle S.M."/>
            <person name="Sehra H.K."/>
            <person name="Sheridan E."/>
            <person name="Skuce C.D."/>
            <person name="Smith S."/>
            <person name="Smith M."/>
            <person name="Spraggon L."/>
            <person name="Squares S.L."/>
            <person name="Steward C.A."/>
            <person name="Sycamore N."/>
            <person name="Tamlyn-Hall G."/>
            <person name="Tester J."/>
            <person name="Theaker A.J."/>
            <person name="Thomas D.W."/>
            <person name="Thorpe A."/>
            <person name="Tracey A."/>
            <person name="Tromans A."/>
            <person name="Tubby B."/>
            <person name="Wall M."/>
            <person name="Wallis J.M."/>
            <person name="West A.P."/>
            <person name="White S.S."/>
            <person name="Whitehead S.L."/>
            <person name="Whittaker H."/>
            <person name="Wild A."/>
            <person name="Willey D.J."/>
            <person name="Wilmer T.E."/>
            <person name="Wood J.M."/>
            <person name="Wray P.W."/>
            <person name="Wyatt J.C."/>
            <person name="Young L."/>
            <person name="Younger R.M."/>
            <person name="Bentley D.R."/>
            <person name="Coulson A."/>
            <person name="Durbin R.M."/>
            <person name="Hubbard T."/>
            <person name="Sulston J.E."/>
            <person name="Dunham I."/>
            <person name="Rogers J."/>
            <person name="Beck S."/>
        </authorList>
    </citation>
    <scope>NUCLEOTIDE SEQUENCE [LARGE SCALE GENOMIC DNA]</scope>
</reference>
<reference key="8">
    <citation type="submission" date="2005-07" db="EMBL/GenBank/DDBJ databases">
        <authorList>
            <person name="Mural R.J."/>
            <person name="Istrail S."/>
            <person name="Sutton G.G."/>
            <person name="Florea L."/>
            <person name="Halpern A.L."/>
            <person name="Mobarry C.M."/>
            <person name="Lippert R."/>
            <person name="Walenz B."/>
            <person name="Shatkay H."/>
            <person name="Dew I."/>
            <person name="Miller J.R."/>
            <person name="Flanigan M.J."/>
            <person name="Edwards N.J."/>
            <person name="Bolanos R."/>
            <person name="Fasulo D."/>
            <person name="Halldorsson B.V."/>
            <person name="Hannenhalli S."/>
            <person name="Turner R."/>
            <person name="Yooseph S."/>
            <person name="Lu F."/>
            <person name="Nusskern D.R."/>
            <person name="Shue B.C."/>
            <person name="Zheng X.H."/>
            <person name="Zhong F."/>
            <person name="Delcher A.L."/>
            <person name="Huson D.H."/>
            <person name="Kravitz S.A."/>
            <person name="Mouchard L."/>
            <person name="Reinert K."/>
            <person name="Remington K.A."/>
            <person name="Clark A.G."/>
            <person name="Waterman M.S."/>
            <person name="Eichler E.E."/>
            <person name="Adams M.D."/>
            <person name="Hunkapiller M.W."/>
            <person name="Myers E.W."/>
            <person name="Venter J.C."/>
        </authorList>
    </citation>
    <scope>NUCLEOTIDE SEQUENCE [LARGE SCALE GENOMIC DNA]</scope>
</reference>
<reference key="9">
    <citation type="journal article" date="2004" name="Genome Res.">
        <title>The status, quality, and expansion of the NIH full-length cDNA project: the Mammalian Gene Collection (MGC).</title>
        <authorList>
            <consortium name="The MGC Project Team"/>
        </authorList>
    </citation>
    <scope>NUCLEOTIDE SEQUENCE [LARGE SCALE MRNA]</scope>
    <source>
        <tissue>Placenta</tissue>
    </source>
</reference>
<reference key="10">
    <citation type="journal article" date="2011" name="BMC Syst. Biol.">
        <title>Initial characterization of the human central proteome.</title>
        <authorList>
            <person name="Burkard T.R."/>
            <person name="Planyavsky M."/>
            <person name="Kaupe I."/>
            <person name="Breitwieser F.P."/>
            <person name="Buerckstuemmer T."/>
            <person name="Bennett K.L."/>
            <person name="Superti-Furga G."/>
            <person name="Colinge J."/>
        </authorList>
    </citation>
    <scope>IDENTIFICATION BY MASS SPECTROMETRY [LARGE SCALE ANALYSIS]</scope>
</reference>
<reference key="11">
    <citation type="journal article" date="2012" name="Mol. Cell. Proteomics">
        <title>Comparative large-scale characterisation of plant vs. mammal proteins reveals similar and idiosyncratic N-alpha acetylation features.</title>
        <authorList>
            <person name="Bienvenut W.V."/>
            <person name="Sumpton D."/>
            <person name="Martinez A."/>
            <person name="Lilla S."/>
            <person name="Espagne C."/>
            <person name="Meinnel T."/>
            <person name="Giglione C."/>
        </authorList>
    </citation>
    <scope>ACETYLATION [LARGE SCALE ANALYSIS] AT MET-1</scope>
    <scope>IDENTIFICATION BY MASS SPECTROMETRY [LARGE SCALE ANALYSIS]</scope>
</reference>
<reference key="12">
    <citation type="journal article" date="2012" name="Proc. Natl. Acad. Sci. U.S.A.">
        <title>N-terminal acetylome analyses and functional insights of the N-terminal acetyltransferase NatB.</title>
        <authorList>
            <person name="Van Damme P."/>
            <person name="Lasa M."/>
            <person name="Polevoda B."/>
            <person name="Gazquez C."/>
            <person name="Elosegui-Artola A."/>
            <person name="Kim D.S."/>
            <person name="De Juan-Pardo E."/>
            <person name="Demeyer K."/>
            <person name="Hole K."/>
            <person name="Larrea E."/>
            <person name="Timmerman E."/>
            <person name="Prieto J."/>
            <person name="Arnesen T."/>
            <person name="Sherman F."/>
            <person name="Gevaert K."/>
            <person name="Aldabe R."/>
        </authorList>
    </citation>
    <scope>ACETYLATION [LARGE SCALE ANALYSIS] AT MET-1</scope>
    <scope>IDENTIFICATION BY MASS SPECTROMETRY [LARGE SCALE ANALYSIS]</scope>
</reference>
<reference key="13">
    <citation type="journal article" date="2014" name="J. Proteomics">
        <title>An enzyme assisted RP-RPLC approach for in-depth analysis of human liver phosphoproteome.</title>
        <authorList>
            <person name="Bian Y."/>
            <person name="Song C."/>
            <person name="Cheng K."/>
            <person name="Dong M."/>
            <person name="Wang F."/>
            <person name="Huang J."/>
            <person name="Sun D."/>
            <person name="Wang L."/>
            <person name="Ye M."/>
            <person name="Zou H."/>
        </authorList>
    </citation>
    <scope>IDENTIFICATION BY MASS SPECTROMETRY [LARGE SCALE ANALYSIS]</scope>
    <source>
        <tissue>Liver</tissue>
    </source>
</reference>
<evidence type="ECO:0000250" key="1"/>
<evidence type="ECO:0000305" key="2"/>
<evidence type="ECO:0007744" key="3">
    <source>
    </source>
</evidence>
<evidence type="ECO:0007744" key="4">
    <source>
    </source>
</evidence>
<evidence type="ECO:0007829" key="5">
    <source>
        <dbReference type="PDB" id="8ZCR"/>
    </source>
</evidence>
<dbReference type="EMBL" id="L40378">
    <property type="protein sequence ID" value="AAC41940.1"/>
    <property type="molecule type" value="mRNA"/>
</dbReference>
<dbReference type="EMBL" id="U71364">
    <property type="protein sequence ID" value="AAC50793.1"/>
    <property type="molecule type" value="mRNA"/>
</dbReference>
<dbReference type="EMBL" id="AB060690">
    <property type="protein sequence ID" value="BAB91078.1"/>
    <property type="molecule type" value="mRNA"/>
</dbReference>
<dbReference type="EMBL" id="AK314842">
    <property type="protein sequence ID" value="BAG37360.1"/>
    <property type="molecule type" value="mRNA"/>
</dbReference>
<dbReference type="EMBL" id="BT006673">
    <property type="protein sequence ID" value="AAP35319.1"/>
    <property type="molecule type" value="mRNA"/>
</dbReference>
<dbReference type="EMBL" id="CR407627">
    <property type="protein sequence ID" value="CAG28555.1"/>
    <property type="molecule type" value="mRNA"/>
</dbReference>
<dbReference type="EMBL" id="AL133351">
    <property type="status" value="NOT_ANNOTATED_CDS"/>
    <property type="molecule type" value="Genomic_DNA"/>
</dbReference>
<dbReference type="EMBL" id="CH471087">
    <property type="protein sequence ID" value="EAW55093.1"/>
    <property type="molecule type" value="Genomic_DNA"/>
</dbReference>
<dbReference type="EMBL" id="BC002538">
    <property type="protein sequence ID" value="AAH02538.1"/>
    <property type="molecule type" value="mRNA"/>
</dbReference>
<dbReference type="CCDS" id="CCDS4478.1"/>
<dbReference type="PIR" id="B59273">
    <property type="entry name" value="B59273"/>
</dbReference>
<dbReference type="RefSeq" id="NP_004146.1">
    <property type="nucleotide sequence ID" value="NM_004155.6"/>
</dbReference>
<dbReference type="RefSeq" id="XP_005249241.1">
    <property type="nucleotide sequence ID" value="XM_005249184.6"/>
</dbReference>
<dbReference type="RefSeq" id="XP_054211615.1">
    <property type="nucleotide sequence ID" value="XM_054355640.1"/>
</dbReference>
<dbReference type="PDB" id="8ZCR">
    <property type="method" value="X-ray"/>
    <property type="resolution" value="1.93 A"/>
    <property type="chains" value="A=2-333, B=344-376"/>
</dbReference>
<dbReference type="PDBsum" id="8ZCR"/>
<dbReference type="SMR" id="P50453"/>
<dbReference type="BioGRID" id="111290">
    <property type="interactions" value="57"/>
</dbReference>
<dbReference type="FunCoup" id="P50453">
    <property type="interactions" value="437"/>
</dbReference>
<dbReference type="IntAct" id="P50453">
    <property type="interactions" value="43"/>
</dbReference>
<dbReference type="STRING" id="9606.ENSP00000370074"/>
<dbReference type="DrugBank" id="DB00481">
    <property type="generic name" value="Raloxifene"/>
</dbReference>
<dbReference type="MEROPS" id="I04.014"/>
<dbReference type="GlyGen" id="P50453">
    <property type="glycosylation" value="1 site, 1 O-linked glycan (1 site)"/>
</dbReference>
<dbReference type="iPTMnet" id="P50453"/>
<dbReference type="PhosphoSitePlus" id="P50453"/>
<dbReference type="SwissPalm" id="P50453"/>
<dbReference type="BioMuta" id="SERPINB9"/>
<dbReference type="DMDM" id="1709896"/>
<dbReference type="OGP" id="P50453"/>
<dbReference type="REPRODUCTION-2DPAGE" id="IPI00032139"/>
<dbReference type="jPOST" id="P50453"/>
<dbReference type="MassIVE" id="P50453"/>
<dbReference type="PaxDb" id="9606-ENSP00000370074"/>
<dbReference type="PeptideAtlas" id="P50453"/>
<dbReference type="ProteomicsDB" id="56228"/>
<dbReference type="Pumba" id="P50453"/>
<dbReference type="Antibodypedia" id="9285">
    <property type="antibodies" value="408 antibodies from 36 providers"/>
</dbReference>
<dbReference type="DNASU" id="5272"/>
<dbReference type="Ensembl" id="ENST00000380698.5">
    <property type="protein sequence ID" value="ENSP00000370074.4"/>
    <property type="gene ID" value="ENSG00000170542.7"/>
</dbReference>
<dbReference type="Ensembl" id="ENST00000718363.1">
    <property type="protein sequence ID" value="ENSP00000520789.1"/>
    <property type="gene ID" value="ENSG00000170542.7"/>
</dbReference>
<dbReference type="GeneID" id="5272"/>
<dbReference type="KEGG" id="hsa:5272"/>
<dbReference type="MANE-Select" id="ENST00000380698.5">
    <property type="protein sequence ID" value="ENSP00000370074.4"/>
    <property type="RefSeq nucleotide sequence ID" value="NM_004155.6"/>
    <property type="RefSeq protein sequence ID" value="NP_004146.1"/>
</dbReference>
<dbReference type="UCSC" id="uc003mug.5">
    <property type="organism name" value="human"/>
</dbReference>
<dbReference type="AGR" id="HGNC:8955"/>
<dbReference type="CTD" id="5272"/>
<dbReference type="DisGeNET" id="5272"/>
<dbReference type="GeneCards" id="SERPINB9"/>
<dbReference type="HGNC" id="HGNC:8955">
    <property type="gene designation" value="SERPINB9"/>
</dbReference>
<dbReference type="HPA" id="ENSG00000170542">
    <property type="expression patterns" value="Tissue enhanced (lymphoid tissue, placenta)"/>
</dbReference>
<dbReference type="MIM" id="601799">
    <property type="type" value="gene"/>
</dbReference>
<dbReference type="neXtProt" id="NX_P50453"/>
<dbReference type="OpenTargets" id="ENSG00000170542"/>
<dbReference type="PharmGKB" id="PA35519"/>
<dbReference type="VEuPathDB" id="HostDB:ENSG00000170542"/>
<dbReference type="eggNOG" id="KOG2392">
    <property type="taxonomic scope" value="Eukaryota"/>
</dbReference>
<dbReference type="GeneTree" id="ENSGT00940000154931"/>
<dbReference type="HOGENOM" id="CLU_023330_0_2_1"/>
<dbReference type="InParanoid" id="P50453"/>
<dbReference type="OMA" id="CLQFYRA"/>
<dbReference type="OrthoDB" id="671595at2759"/>
<dbReference type="PAN-GO" id="P50453">
    <property type="GO annotations" value="4 GO annotations based on evolutionary models"/>
</dbReference>
<dbReference type="PhylomeDB" id="P50453"/>
<dbReference type="TreeFam" id="TF352619"/>
<dbReference type="PathwayCommons" id="P50453"/>
<dbReference type="SignaLink" id="P50453"/>
<dbReference type="BioGRID-ORCS" id="5272">
    <property type="hits" value="9 hits in 1161 CRISPR screens"/>
</dbReference>
<dbReference type="ChiTaRS" id="SERPINB9">
    <property type="organism name" value="human"/>
</dbReference>
<dbReference type="GeneWiki" id="SERPINB9"/>
<dbReference type="GenomeRNAi" id="5272"/>
<dbReference type="Pharos" id="P50453">
    <property type="development level" value="Tbio"/>
</dbReference>
<dbReference type="PRO" id="PR:P50453"/>
<dbReference type="Proteomes" id="UP000005640">
    <property type="component" value="Chromosome 6"/>
</dbReference>
<dbReference type="RNAct" id="P50453">
    <property type="molecule type" value="protein"/>
</dbReference>
<dbReference type="Bgee" id="ENSG00000170542">
    <property type="expression patterns" value="Expressed in epithelium of nasopharynx and 175 other cell types or tissues"/>
</dbReference>
<dbReference type="ExpressionAtlas" id="P50453">
    <property type="expression patterns" value="baseline and differential"/>
</dbReference>
<dbReference type="GO" id="GO:0062023">
    <property type="term" value="C:collagen-containing extracellular matrix"/>
    <property type="evidence" value="ECO:0007005"/>
    <property type="project" value="BHF-UCL"/>
</dbReference>
<dbReference type="GO" id="GO:0005737">
    <property type="term" value="C:cytoplasm"/>
    <property type="evidence" value="ECO:0000314"/>
    <property type="project" value="UniProtKB"/>
</dbReference>
<dbReference type="GO" id="GO:0005829">
    <property type="term" value="C:cytosol"/>
    <property type="evidence" value="ECO:0000314"/>
    <property type="project" value="UniProtKB"/>
</dbReference>
<dbReference type="GO" id="GO:0070062">
    <property type="term" value="C:extracellular exosome"/>
    <property type="evidence" value="ECO:0007005"/>
    <property type="project" value="UniProtKB"/>
</dbReference>
<dbReference type="GO" id="GO:0005615">
    <property type="term" value="C:extracellular space"/>
    <property type="evidence" value="ECO:0000314"/>
    <property type="project" value="UniProtKB"/>
</dbReference>
<dbReference type="GO" id="GO:0005794">
    <property type="term" value="C:Golgi apparatus"/>
    <property type="evidence" value="ECO:0000314"/>
    <property type="project" value="HPA"/>
</dbReference>
<dbReference type="GO" id="GO:0016020">
    <property type="term" value="C:membrane"/>
    <property type="evidence" value="ECO:0007005"/>
    <property type="project" value="UniProtKB"/>
</dbReference>
<dbReference type="GO" id="GO:0005654">
    <property type="term" value="C:nucleoplasm"/>
    <property type="evidence" value="ECO:0000314"/>
    <property type="project" value="HPA"/>
</dbReference>
<dbReference type="GO" id="GO:0005634">
    <property type="term" value="C:nucleus"/>
    <property type="evidence" value="ECO:0000314"/>
    <property type="project" value="UniProtKB"/>
</dbReference>
<dbReference type="GO" id="GO:0043027">
    <property type="term" value="F:cysteine-type endopeptidase inhibitor activity involved in apoptotic process"/>
    <property type="evidence" value="ECO:0000314"/>
    <property type="project" value="UniProtKB"/>
</dbReference>
<dbReference type="GO" id="GO:0002020">
    <property type="term" value="F:protease binding"/>
    <property type="evidence" value="ECO:0000353"/>
    <property type="project" value="UniProtKB"/>
</dbReference>
<dbReference type="GO" id="GO:0004867">
    <property type="term" value="F:serine-type endopeptidase inhibitor activity"/>
    <property type="evidence" value="ECO:0000314"/>
    <property type="project" value="UniProtKB"/>
</dbReference>
<dbReference type="GO" id="GO:0071391">
    <property type="term" value="P:cellular response to estrogen stimulus"/>
    <property type="evidence" value="ECO:0000270"/>
    <property type="project" value="UniProtKB"/>
</dbReference>
<dbReference type="GO" id="GO:0006955">
    <property type="term" value="P:immune response"/>
    <property type="evidence" value="ECO:0000314"/>
    <property type="project" value="UniProtKB"/>
</dbReference>
<dbReference type="GO" id="GO:0002448">
    <property type="term" value="P:mast cell mediated immunity"/>
    <property type="evidence" value="ECO:0000270"/>
    <property type="project" value="UniProtKB"/>
</dbReference>
<dbReference type="GO" id="GO:0043066">
    <property type="term" value="P:negative regulation of apoptotic process"/>
    <property type="evidence" value="ECO:0000315"/>
    <property type="project" value="UniProtKB"/>
</dbReference>
<dbReference type="GO" id="GO:0010951">
    <property type="term" value="P:negative regulation of endopeptidase activity"/>
    <property type="evidence" value="ECO:0000315"/>
    <property type="project" value="UniProtKB"/>
</dbReference>
<dbReference type="GO" id="GO:0042270">
    <property type="term" value="P:protection from natural killer cell mediated cytotoxicity"/>
    <property type="evidence" value="ECO:0000315"/>
    <property type="project" value="UniProtKB"/>
</dbReference>
<dbReference type="CDD" id="cd19568">
    <property type="entry name" value="serpinB9_CAP-3"/>
    <property type="match status" value="1"/>
</dbReference>
<dbReference type="FunFam" id="3.30.497.10:FF:000002">
    <property type="entry name" value="Serpin family B member 6"/>
    <property type="match status" value="1"/>
</dbReference>
<dbReference type="FunFam" id="2.30.39.10:FF:000014">
    <property type="entry name" value="Serpin family B member 9"/>
    <property type="match status" value="1"/>
</dbReference>
<dbReference type="FunFam" id="2.30.39.10:FF:000021">
    <property type="entry name" value="Serpin family B member 9"/>
    <property type="match status" value="1"/>
</dbReference>
<dbReference type="Gene3D" id="2.30.39.10">
    <property type="entry name" value="Alpha-1-antitrypsin, domain 1"/>
    <property type="match status" value="2"/>
</dbReference>
<dbReference type="Gene3D" id="3.30.497.10">
    <property type="entry name" value="Antithrombin, subunit I, domain 2"/>
    <property type="match status" value="1"/>
</dbReference>
<dbReference type="InterPro" id="IPR000240">
    <property type="entry name" value="Serpin_B9/Maspin"/>
</dbReference>
<dbReference type="InterPro" id="IPR023795">
    <property type="entry name" value="Serpin_CS"/>
</dbReference>
<dbReference type="InterPro" id="IPR023796">
    <property type="entry name" value="Serpin_dom"/>
</dbReference>
<dbReference type="InterPro" id="IPR000215">
    <property type="entry name" value="Serpin_fam"/>
</dbReference>
<dbReference type="InterPro" id="IPR036186">
    <property type="entry name" value="Serpin_sf"/>
</dbReference>
<dbReference type="InterPro" id="IPR042178">
    <property type="entry name" value="Serpin_sf_1"/>
</dbReference>
<dbReference type="InterPro" id="IPR042185">
    <property type="entry name" value="Serpin_sf_2"/>
</dbReference>
<dbReference type="PANTHER" id="PTHR11461">
    <property type="entry name" value="SERINE PROTEASE INHIBITOR, SERPIN"/>
    <property type="match status" value="1"/>
</dbReference>
<dbReference type="PANTHER" id="PTHR11461:SF350">
    <property type="entry name" value="SERPIN B9"/>
    <property type="match status" value="1"/>
</dbReference>
<dbReference type="Pfam" id="PF00079">
    <property type="entry name" value="Serpin"/>
    <property type="match status" value="1"/>
</dbReference>
<dbReference type="PRINTS" id="PR00676">
    <property type="entry name" value="MASPIN"/>
</dbReference>
<dbReference type="SMART" id="SM00093">
    <property type="entry name" value="SERPIN"/>
    <property type="match status" value="1"/>
</dbReference>
<dbReference type="SUPFAM" id="SSF56574">
    <property type="entry name" value="Serpins"/>
    <property type="match status" value="1"/>
</dbReference>
<dbReference type="PROSITE" id="PS00284">
    <property type="entry name" value="SERPIN"/>
    <property type="match status" value="1"/>
</dbReference>
<protein>
    <recommendedName>
        <fullName>Serpin B9</fullName>
    </recommendedName>
    <alternativeName>
        <fullName>Cytoplasmic antiproteinase 3</fullName>
        <shortName>CAP-3</shortName>
        <shortName>CAP3</shortName>
    </alternativeName>
    <alternativeName>
        <fullName>Peptidase inhibitor 9</fullName>
        <shortName>PI-9</shortName>
    </alternativeName>
</protein>
<organism>
    <name type="scientific">Homo sapiens</name>
    <name type="common">Human</name>
    <dbReference type="NCBI Taxonomy" id="9606"/>
    <lineage>
        <taxon>Eukaryota</taxon>
        <taxon>Metazoa</taxon>
        <taxon>Chordata</taxon>
        <taxon>Craniata</taxon>
        <taxon>Vertebrata</taxon>
        <taxon>Euteleostomi</taxon>
        <taxon>Mammalia</taxon>
        <taxon>Eutheria</taxon>
        <taxon>Euarchontoglires</taxon>
        <taxon>Primates</taxon>
        <taxon>Haplorrhini</taxon>
        <taxon>Catarrhini</taxon>
        <taxon>Hominidae</taxon>
        <taxon>Homo</taxon>
    </lineage>
</organism>
<comment type="function">
    <text>Granzyme B inhibitor.</text>
</comment>
<comment type="interaction">
    <interactant intactId="EBI-711626">
        <id>P50453</id>
    </interactant>
    <interactant intactId="EBI-717142">
        <id>Q11203</id>
        <label>ST3GAL3</label>
    </interactant>
    <organismsDiffer>false</organismsDiffer>
    <experiments>2</experiments>
</comment>
<comment type="interaction">
    <interactant intactId="EBI-711626">
        <id>P50453</id>
    </interactant>
    <interactant intactId="EBI-523498">
        <id>O00463</id>
        <label>TRAF5</label>
    </interactant>
    <organismsDiffer>false</organismsDiffer>
    <experiments>6</experiments>
</comment>
<comment type="subcellular location">
    <subcellularLocation>
        <location>Cytoplasm</location>
    </subcellularLocation>
</comment>
<comment type="similarity">
    <text evidence="2">Belongs to the serpin family. Ov-serpin subfamily.</text>
</comment>
<feature type="chain" id="PRO_0000094113" description="Serpin B9">
    <location>
        <begin position="1"/>
        <end position="376"/>
    </location>
</feature>
<feature type="site" description="Reactive bond" evidence="1">
    <location>
        <begin position="340"/>
        <end position="341"/>
    </location>
</feature>
<feature type="modified residue" description="N-acetylmethionine" evidence="3 4">
    <location>
        <position position="1"/>
    </location>
</feature>
<feature type="helix" evidence="5">
    <location>
        <begin position="5"/>
        <end position="22"/>
    </location>
</feature>
<feature type="strand" evidence="5">
    <location>
        <begin position="28"/>
        <end position="30"/>
    </location>
</feature>
<feature type="helix" evidence="5">
    <location>
        <begin position="32"/>
        <end position="43"/>
    </location>
</feature>
<feature type="helix" evidence="5">
    <location>
        <begin position="48"/>
        <end position="57"/>
    </location>
</feature>
<feature type="helix" evidence="5">
    <location>
        <begin position="63"/>
        <end position="73"/>
    </location>
</feature>
<feature type="strand" evidence="5">
    <location>
        <begin position="85"/>
        <end position="95"/>
    </location>
</feature>
<feature type="helix" evidence="5">
    <location>
        <begin position="102"/>
        <end position="112"/>
    </location>
</feature>
<feature type="strand" evidence="5">
    <location>
        <begin position="115"/>
        <end position="119"/>
    </location>
</feature>
<feature type="turn" evidence="5">
    <location>
        <begin position="121"/>
        <end position="123"/>
    </location>
</feature>
<feature type="helix" evidence="5">
    <location>
        <begin position="125"/>
        <end position="139"/>
    </location>
</feature>
<feature type="turn" evidence="5">
    <location>
        <begin position="140"/>
        <end position="142"/>
    </location>
</feature>
<feature type="strand" evidence="5">
    <location>
        <begin position="157"/>
        <end position="173"/>
    </location>
</feature>
<feature type="helix" evidence="5">
    <location>
        <begin position="177"/>
        <end position="179"/>
    </location>
</feature>
<feature type="strand" evidence="5">
    <location>
        <begin position="181"/>
        <end position="190"/>
    </location>
</feature>
<feature type="strand" evidence="5">
    <location>
        <begin position="192"/>
        <end position="209"/>
    </location>
</feature>
<feature type="turn" evidence="5">
    <location>
        <begin position="210"/>
        <end position="213"/>
    </location>
</feature>
<feature type="strand" evidence="5">
    <location>
        <begin position="214"/>
        <end position="221"/>
    </location>
</feature>
<feature type="helix" evidence="5">
    <location>
        <begin position="222"/>
        <end position="224"/>
    </location>
</feature>
<feature type="strand" evidence="5">
    <location>
        <begin position="225"/>
        <end position="233"/>
    </location>
</feature>
<feature type="helix" evidence="5">
    <location>
        <begin position="239"/>
        <end position="245"/>
    </location>
</feature>
<feature type="helix" evidence="5">
    <location>
        <begin position="248"/>
        <end position="254"/>
    </location>
</feature>
<feature type="turn" evidence="5">
    <location>
        <begin position="257"/>
        <end position="259"/>
    </location>
</feature>
<feature type="strand" evidence="5">
    <location>
        <begin position="260"/>
        <end position="270"/>
    </location>
</feature>
<feature type="strand" evidence="5">
    <location>
        <begin position="272"/>
        <end position="279"/>
    </location>
</feature>
<feature type="helix" evidence="5">
    <location>
        <begin position="281"/>
        <end position="286"/>
    </location>
</feature>
<feature type="helix" evidence="5">
    <location>
        <begin position="291"/>
        <end position="293"/>
    </location>
</feature>
<feature type="turn" evidence="5">
    <location>
        <begin position="295"/>
        <end position="297"/>
    </location>
</feature>
<feature type="turn" evidence="5">
    <location>
        <begin position="301"/>
        <end position="303"/>
    </location>
</feature>
<feature type="strand" evidence="5">
    <location>
        <begin position="309"/>
        <end position="322"/>
    </location>
</feature>
<feature type="strand" evidence="5">
    <location>
        <begin position="324"/>
        <end position="333"/>
    </location>
</feature>
<feature type="strand" evidence="5">
    <location>
        <begin position="348"/>
        <end position="350"/>
    </location>
</feature>
<feature type="strand" evidence="5">
    <location>
        <begin position="355"/>
        <end position="361"/>
    </location>
</feature>
<feature type="turn" evidence="5">
    <location>
        <begin position="362"/>
        <end position="365"/>
    </location>
</feature>
<feature type="strand" evidence="5">
    <location>
        <begin position="366"/>
        <end position="373"/>
    </location>
</feature>
<gene>
    <name type="primary">SERPINB9</name>
    <name type="synonym">PI9</name>
</gene>
<accession>P50453</accession>
<accession>B2RBW3</accession>
<accession>Q5TD03</accession>
<keyword id="KW-0002">3D-structure</keyword>
<keyword id="KW-0007">Acetylation</keyword>
<keyword id="KW-0963">Cytoplasm</keyword>
<keyword id="KW-0646">Protease inhibitor</keyword>
<keyword id="KW-1267">Proteomics identification</keyword>
<keyword id="KW-1185">Reference proteome</keyword>
<keyword id="KW-0722">Serine protease inhibitor</keyword>
<sequence>METLSNASGTFAIRLLKILCQDNPSHNVFCSPVSISSALAMVLLGAKGNTATQMAQALSLNTEEDIHRAFQSLLTEVNKAGTQYLLRTANRLFGEKTCQFLSTFKESCLQFYHAELKELSFIRAAEESRKHINTWVSKKTEGKIEELLPGSSIDAETRLVLVNAIYFKGKWNEPFDETYTREMPFKINQEEQRPVQMMYQEATFKLAHVGEVRAQLLELPYARKELSLLVLLPDDGVELSTVEKSLTFEKLTAWTKPDCMKSTEVEVLLPKFKLQEDYDMESVLRHLGIVDAFQQGKADLSAMSAERDLCLSKFVHKSFVEVNEEGTEAAAASSCFVVAECCMESGPRFCADHPFLFFIRHNRANSILFCGRFSSP</sequence>
<name>SPB9_HUMAN</name>
<proteinExistence type="evidence at protein level"/>